<accession>Q25263</accession>
<keyword id="KW-0067">ATP-binding</keyword>
<keyword id="KW-0115">cAMP biosynthesis</keyword>
<keyword id="KW-0325">Glycoprotein</keyword>
<keyword id="KW-0456">Lyase</keyword>
<keyword id="KW-0460">Magnesium</keyword>
<keyword id="KW-0472">Membrane</keyword>
<keyword id="KW-0479">Metal-binding</keyword>
<keyword id="KW-0547">Nucleotide-binding</keyword>
<keyword id="KW-0675">Receptor</keyword>
<keyword id="KW-0812">Transmembrane</keyword>
<keyword id="KW-1133">Transmembrane helix</keyword>
<feature type="chain" id="PRO_0000195735" description="Receptor-type adenylate cyclase B">
    <location>
        <begin position="1"/>
        <end position="1331"/>
    </location>
</feature>
<feature type="topological domain" description="Cytoplasmic" evidence="2">
    <location>
        <begin position="1"/>
        <end position="33"/>
    </location>
</feature>
<feature type="transmembrane region" description="Helical" evidence="2">
    <location>
        <begin position="34"/>
        <end position="54"/>
    </location>
</feature>
<feature type="topological domain" description="Extracellular" evidence="2">
    <location>
        <begin position="55"/>
        <end position="898"/>
    </location>
</feature>
<feature type="transmembrane region" description="Helical" evidence="2">
    <location>
        <begin position="899"/>
        <end position="919"/>
    </location>
</feature>
<feature type="topological domain" description="Cytoplasmic" evidence="2">
    <location>
        <begin position="920"/>
        <end position="1331"/>
    </location>
</feature>
<feature type="domain" description="Guanylate cyclase" evidence="3">
    <location>
        <begin position="940"/>
        <end position="1094"/>
    </location>
</feature>
<feature type="binding site" evidence="1">
    <location>
        <position position="945"/>
    </location>
    <ligand>
        <name>Mg(2+)</name>
        <dbReference type="ChEBI" id="CHEBI:18420"/>
    </ligand>
</feature>
<feature type="binding site" evidence="1">
    <location>
        <position position="988"/>
    </location>
    <ligand>
        <name>Mg(2+)</name>
        <dbReference type="ChEBI" id="CHEBI:18420"/>
    </ligand>
</feature>
<feature type="glycosylation site" description="N-linked (GlcNAc...) asparagine" evidence="2">
    <location>
        <position position="255"/>
    </location>
</feature>
<feature type="glycosylation site" description="N-linked (GlcNAc...) asparagine" evidence="2">
    <location>
        <position position="429"/>
    </location>
</feature>
<feature type="glycosylation site" description="N-linked (GlcNAc...) asparagine" evidence="2">
    <location>
        <position position="558"/>
    </location>
</feature>
<feature type="glycosylation site" description="N-linked (GlcNAc...) asparagine" evidence="2">
    <location>
        <position position="574"/>
    </location>
</feature>
<feature type="glycosylation site" description="N-linked (GlcNAc...) asparagine" evidence="2">
    <location>
        <position position="657"/>
    </location>
</feature>
<reference key="1">
    <citation type="journal article" date="1995" name="J. Biol. Chem.">
        <title>A family of putative receptor-adenylate cyclases from Leishmania donovani.</title>
        <authorList>
            <person name="Sanchez M.A."/>
            <person name="Zeoli D."/>
            <person name="Klamo E.M."/>
            <person name="Kavanaugh M.P."/>
            <person name="Landfear S.M."/>
        </authorList>
    </citation>
    <scope>NUCLEOTIDE SEQUENCE [GENOMIC DNA]</scope>
    <source>
        <strain>MHOM/SD/62/1S</strain>
    </source>
</reference>
<organism>
    <name type="scientific">Leishmania donovani</name>
    <dbReference type="NCBI Taxonomy" id="5661"/>
    <lineage>
        <taxon>Eukaryota</taxon>
        <taxon>Discoba</taxon>
        <taxon>Euglenozoa</taxon>
        <taxon>Kinetoplastea</taxon>
        <taxon>Metakinetoplastina</taxon>
        <taxon>Trypanosomatida</taxon>
        <taxon>Trypanosomatidae</taxon>
        <taxon>Leishmaniinae</taxon>
        <taxon>Leishmania</taxon>
    </lineage>
</organism>
<protein>
    <recommendedName>
        <fullName>Receptor-type adenylate cyclase B</fullName>
        <ecNumber>4.6.1.1</ecNumber>
    </recommendedName>
    <alternativeName>
        <fullName>ATP pyrophosphate-lyase</fullName>
    </alternativeName>
    <alternativeName>
        <fullName>Adenylyl cyclase</fullName>
    </alternativeName>
</protein>
<proteinExistence type="evidence at transcript level"/>
<name>CYAB_LEIDO</name>
<gene>
    <name type="primary">RAC-B</name>
</gene>
<sequence>MYADATHPRRACWCGAGGVSGCVRQRHAYRCSRLLAGVLLIVGALTLTLAVSTVPAAWAAGAVASSDEPVYLLNAMYSLSDYNAKHAKALWLGIDSALHAVGYTAARGRPIKIIEPDPTDDLSDIVAVVLKALKDYPTLLGVIGPYSDTRLGAVLISPEIQNSGLMFLGPFTGSSSMRAWNENLYFMRAEPRLEIMAMVKHIANTFRARRTAFMYLTGEQYGSFEHKSLVELMTSLSLDPPAVYSASYSTSTAVNMTAFDAMADTRPQVIIIWGIPAGQVEELLKVVLTDPRTSSAYIMPSFALQQMTFQVYYDLAMAGKLTPVDGQIISSATSFPLTEPASVHLRVFRAQMGEYMVKTGRVDASLWADEAKAVQQYGPWEHEASSSDSAAYVNNFFNEHPCVTQLMIAGWISGSLIAQTLAEENRIANRTAYRQYMFSQQRYIVGEDFVLGDYGGPCNGVAEFLGAVCYCNQGGHSAVLSRLDRAVWTVITESGVSFTQKNCYSDGTTLPRPLNFLTLIFAEHPLLAQVGLTFKTSISTLVAYLQYNASPVNAATVNVTDTTPQALHDAVTTNYTTDVVVGVTVKGMNVDGYLVPSPIHPRPHLVELLRNYVYLMPTLEQQMFVLYAKLSAVRGVTSIDSAVHMILHGYASDEVANITAVLRKSAATFNYDNPTVTAVPSTKTVGSALAHGQINFVLAVTAADVADIVDFLVEEKTSIVVIVFDDLVIQYPTLVTALKSKPASVQARVITFTNLPLWSDTSESAHAASKLLTVFHDALPDPSQHTPGFLSAVLTGSFCASMRRLADSVHSTSLTDMVYREGSVTTFAEPFGRFQWGCTTTPTDRFCVYHNYGAQGIVMLSVQRMLDPTVPQLSSPMTPTMDYRPRQRSHALTPAQRGGAIAGIALLTVILLAVAGLALYCCMDNRNNDAAPKDGDEPVTLLFTDIESSTALWAALPQLMSDAIAAHHRVIRQLVKKYGCYEVKTIGDSFMIACRSAHSAVSLACEIQTKLLKHDWGTEALDRAYREFELARVDTLDDYEPPTARLSEEEYAALWCGLRVRVGIHTGLTDIRYDEVTRGYDYYGDTSNMAARTEAVANGGQVVATEAAWWALSNDERAGIAHTAMGPQGLRGVPFAVEMFQLNAVPGRRHAALRTEIEAILPDDTATDTASSAAGALLSSVGTINGPAAGIAFVLASCFAPYPVAQRVRELQPLLSKWGVGAPPRSRLVSEEDYCQGLMNRLAIRIATVSQARCPVGNNGAAVDLDVQHAGTAEVMNPLLGEGSFISDGARARHSGLTAVPPSAEPSAMRMRRVGRKVPERPTVCNVRGAH</sequence>
<evidence type="ECO:0000250" key="1"/>
<evidence type="ECO:0000255" key="2"/>
<evidence type="ECO:0000255" key="3">
    <source>
        <dbReference type="PROSITE-ProRule" id="PRU00099"/>
    </source>
</evidence>
<evidence type="ECO:0000305" key="4"/>
<dbReference type="EC" id="4.6.1.1"/>
<dbReference type="EMBL" id="U17043">
    <property type="protein sequence ID" value="AAA74999.1"/>
    <property type="molecule type" value="Genomic_DNA"/>
</dbReference>
<dbReference type="PIR" id="T18310">
    <property type="entry name" value="T18310"/>
</dbReference>
<dbReference type="SMR" id="Q25263"/>
<dbReference type="GlyCosmos" id="Q25263">
    <property type="glycosylation" value="5 sites, No reported glycans"/>
</dbReference>
<dbReference type="VEuPathDB" id="TriTrypDB:LdBPK_170140.1"/>
<dbReference type="VEuPathDB" id="TriTrypDB:LdBPK_363330.1"/>
<dbReference type="VEuPathDB" id="TriTrypDB:LdCL_170007400"/>
<dbReference type="VEuPathDB" id="TriTrypDB:LDHU3_17.0400"/>
<dbReference type="GO" id="GO:0016020">
    <property type="term" value="C:membrane"/>
    <property type="evidence" value="ECO:0007669"/>
    <property type="project" value="UniProtKB-SubCell"/>
</dbReference>
<dbReference type="GO" id="GO:0004016">
    <property type="term" value="F:adenylate cyclase activity"/>
    <property type="evidence" value="ECO:0007669"/>
    <property type="project" value="UniProtKB-EC"/>
</dbReference>
<dbReference type="GO" id="GO:0005524">
    <property type="term" value="F:ATP binding"/>
    <property type="evidence" value="ECO:0007669"/>
    <property type="project" value="UniProtKB-KW"/>
</dbReference>
<dbReference type="GO" id="GO:0046872">
    <property type="term" value="F:metal ion binding"/>
    <property type="evidence" value="ECO:0007669"/>
    <property type="project" value="UniProtKB-KW"/>
</dbReference>
<dbReference type="GO" id="GO:0006171">
    <property type="term" value="P:cAMP biosynthetic process"/>
    <property type="evidence" value="ECO:0007669"/>
    <property type="project" value="UniProtKB-KW"/>
</dbReference>
<dbReference type="GO" id="GO:0035556">
    <property type="term" value="P:intracellular signal transduction"/>
    <property type="evidence" value="ECO:0007669"/>
    <property type="project" value="InterPro"/>
</dbReference>
<dbReference type="CDD" id="cd07556">
    <property type="entry name" value="Nucleotidyl_cyc_III"/>
    <property type="match status" value="1"/>
</dbReference>
<dbReference type="FunFam" id="3.30.70.1230:FF:000022">
    <property type="entry name" value="Receptor-type adenylate cyclase GRESAG 4, putative"/>
    <property type="match status" value="1"/>
</dbReference>
<dbReference type="Gene3D" id="3.40.50.2300">
    <property type="match status" value="2"/>
</dbReference>
<dbReference type="Gene3D" id="3.30.70.1230">
    <property type="entry name" value="Nucleotide cyclase"/>
    <property type="match status" value="1"/>
</dbReference>
<dbReference type="InterPro" id="IPR001054">
    <property type="entry name" value="A/G_cyclase"/>
</dbReference>
<dbReference type="InterPro" id="IPR050697">
    <property type="entry name" value="Adenylyl/Guanylyl_Cyclase_3/4"/>
</dbReference>
<dbReference type="InterPro" id="IPR029787">
    <property type="entry name" value="Nucleotide_cyclase"/>
</dbReference>
<dbReference type="InterPro" id="IPR028082">
    <property type="entry name" value="Peripla_BP_I"/>
</dbReference>
<dbReference type="PANTHER" id="PTHR43081:SF1">
    <property type="entry name" value="ADENYLATE CYCLASE, TERMINAL-DIFFERENTIATION SPECIFIC"/>
    <property type="match status" value="1"/>
</dbReference>
<dbReference type="PANTHER" id="PTHR43081">
    <property type="entry name" value="ADENYLATE CYCLASE, TERMINAL-DIFFERENTIATION SPECIFIC-RELATED"/>
    <property type="match status" value="1"/>
</dbReference>
<dbReference type="Pfam" id="PF00211">
    <property type="entry name" value="Guanylate_cyc"/>
    <property type="match status" value="1"/>
</dbReference>
<dbReference type="Pfam" id="PF25493">
    <property type="entry name" value="Peripla_BP_A-cyclase"/>
    <property type="match status" value="1"/>
</dbReference>
<dbReference type="Pfam" id="PF25495">
    <property type="entry name" value="Peripla_BP_A-cyclase_1"/>
    <property type="match status" value="1"/>
</dbReference>
<dbReference type="SMART" id="SM00044">
    <property type="entry name" value="CYCc"/>
    <property type="match status" value="1"/>
</dbReference>
<dbReference type="SUPFAM" id="SSF55073">
    <property type="entry name" value="Nucleotide cyclase"/>
    <property type="match status" value="1"/>
</dbReference>
<dbReference type="SUPFAM" id="SSF53822">
    <property type="entry name" value="Periplasmic binding protein-like I"/>
    <property type="match status" value="1"/>
</dbReference>
<dbReference type="PROSITE" id="PS50125">
    <property type="entry name" value="GUANYLATE_CYCLASE_2"/>
    <property type="match status" value="1"/>
</dbReference>
<comment type="function">
    <text>Could act as a receptor for an unknown ligand.</text>
</comment>
<comment type="catalytic activity">
    <reaction>
        <text>ATP = 3',5'-cyclic AMP + diphosphate</text>
        <dbReference type="Rhea" id="RHEA:15389"/>
        <dbReference type="ChEBI" id="CHEBI:30616"/>
        <dbReference type="ChEBI" id="CHEBI:33019"/>
        <dbReference type="ChEBI" id="CHEBI:58165"/>
        <dbReference type="EC" id="4.6.1.1"/>
    </reaction>
</comment>
<comment type="cofactor">
    <cofactor evidence="1">
        <name>Mg(2+)</name>
        <dbReference type="ChEBI" id="CHEBI:18420"/>
    </cofactor>
    <text evidence="1">Binds 1 Mg(2+) ion per subunit.</text>
</comment>
<comment type="subcellular location">
    <subcellularLocation>
        <location evidence="4">Membrane</location>
        <topology evidence="4">Multi-pass membrane protein</topology>
    </subcellularLocation>
</comment>
<comment type="developmental stage">
    <text>Expressed in the insect stage (promastigote) but not in the mammalian host stage of the parasite life cycle.</text>
</comment>
<comment type="similarity">
    <text evidence="4">Belongs to the adenylyl cyclase class-3 family.</text>
</comment>